<keyword id="KW-0021">Allosteric enzyme</keyword>
<keyword id="KW-0963">Cytoplasm</keyword>
<keyword id="KW-0520">NAD</keyword>
<keyword id="KW-0560">Oxidoreductase</keyword>
<keyword id="KW-0597">Phosphoprotein</keyword>
<dbReference type="EC" id="1.1.1.27" evidence="1"/>
<dbReference type="EMBL" id="CP000259">
    <property type="protein sequence ID" value="ABF32178.1"/>
    <property type="molecule type" value="Genomic_DNA"/>
</dbReference>
<dbReference type="RefSeq" id="WP_002984645.1">
    <property type="nucleotide sequence ID" value="NC_008021.1"/>
</dbReference>
<dbReference type="SMR" id="Q1JLP1"/>
<dbReference type="KEGG" id="spk:MGAS9429_Spy0991"/>
<dbReference type="HOGENOM" id="CLU_045401_1_1_9"/>
<dbReference type="UniPathway" id="UPA00554">
    <property type="reaction ID" value="UER00611"/>
</dbReference>
<dbReference type="Proteomes" id="UP000002433">
    <property type="component" value="Chromosome"/>
</dbReference>
<dbReference type="GO" id="GO:0005737">
    <property type="term" value="C:cytoplasm"/>
    <property type="evidence" value="ECO:0007669"/>
    <property type="project" value="UniProtKB-SubCell"/>
</dbReference>
<dbReference type="GO" id="GO:0004459">
    <property type="term" value="F:L-lactate dehydrogenase activity"/>
    <property type="evidence" value="ECO:0007669"/>
    <property type="project" value="UniProtKB-UniRule"/>
</dbReference>
<dbReference type="GO" id="GO:0006096">
    <property type="term" value="P:glycolytic process"/>
    <property type="evidence" value="ECO:0007669"/>
    <property type="project" value="UniProtKB-UniRule"/>
</dbReference>
<dbReference type="GO" id="GO:0006089">
    <property type="term" value="P:lactate metabolic process"/>
    <property type="evidence" value="ECO:0007669"/>
    <property type="project" value="TreeGrafter"/>
</dbReference>
<dbReference type="CDD" id="cd05291">
    <property type="entry name" value="HicDH_like"/>
    <property type="match status" value="1"/>
</dbReference>
<dbReference type="FunFam" id="3.40.50.720:FF:000018">
    <property type="entry name" value="Malate dehydrogenase"/>
    <property type="match status" value="1"/>
</dbReference>
<dbReference type="Gene3D" id="3.90.110.10">
    <property type="entry name" value="Lactate dehydrogenase/glycoside hydrolase, family 4, C-terminal"/>
    <property type="match status" value="1"/>
</dbReference>
<dbReference type="Gene3D" id="3.40.50.720">
    <property type="entry name" value="NAD(P)-binding Rossmann-like Domain"/>
    <property type="match status" value="1"/>
</dbReference>
<dbReference type="HAMAP" id="MF_00488">
    <property type="entry name" value="Lactate_dehydrog"/>
    <property type="match status" value="1"/>
</dbReference>
<dbReference type="InterPro" id="IPR001557">
    <property type="entry name" value="L-lactate/malate_DH"/>
</dbReference>
<dbReference type="InterPro" id="IPR011304">
    <property type="entry name" value="L-lactate_DH"/>
</dbReference>
<dbReference type="InterPro" id="IPR018177">
    <property type="entry name" value="L-lactate_DH_AS"/>
</dbReference>
<dbReference type="InterPro" id="IPR022383">
    <property type="entry name" value="Lactate/malate_DH_C"/>
</dbReference>
<dbReference type="InterPro" id="IPR001236">
    <property type="entry name" value="Lactate/malate_DH_N"/>
</dbReference>
<dbReference type="InterPro" id="IPR015955">
    <property type="entry name" value="Lactate_DH/Glyco_Ohase_4_C"/>
</dbReference>
<dbReference type="InterPro" id="IPR036291">
    <property type="entry name" value="NAD(P)-bd_dom_sf"/>
</dbReference>
<dbReference type="NCBIfam" id="TIGR01771">
    <property type="entry name" value="L-LDH-NAD"/>
    <property type="match status" value="1"/>
</dbReference>
<dbReference type="NCBIfam" id="NF000824">
    <property type="entry name" value="PRK00066.1"/>
    <property type="match status" value="1"/>
</dbReference>
<dbReference type="PANTHER" id="PTHR43128">
    <property type="entry name" value="L-2-HYDROXYCARBOXYLATE DEHYDROGENASE (NAD(P)(+))"/>
    <property type="match status" value="1"/>
</dbReference>
<dbReference type="PANTHER" id="PTHR43128:SF16">
    <property type="entry name" value="L-LACTATE DEHYDROGENASE"/>
    <property type="match status" value="1"/>
</dbReference>
<dbReference type="Pfam" id="PF02866">
    <property type="entry name" value="Ldh_1_C"/>
    <property type="match status" value="1"/>
</dbReference>
<dbReference type="Pfam" id="PF00056">
    <property type="entry name" value="Ldh_1_N"/>
    <property type="match status" value="1"/>
</dbReference>
<dbReference type="PIRSF" id="PIRSF000102">
    <property type="entry name" value="Lac_mal_DH"/>
    <property type="match status" value="1"/>
</dbReference>
<dbReference type="PRINTS" id="PR00086">
    <property type="entry name" value="LLDHDRGNASE"/>
</dbReference>
<dbReference type="SUPFAM" id="SSF56327">
    <property type="entry name" value="LDH C-terminal domain-like"/>
    <property type="match status" value="1"/>
</dbReference>
<dbReference type="SUPFAM" id="SSF51735">
    <property type="entry name" value="NAD(P)-binding Rossmann-fold domains"/>
    <property type="match status" value="1"/>
</dbReference>
<dbReference type="PROSITE" id="PS00064">
    <property type="entry name" value="L_LDH"/>
    <property type="match status" value="1"/>
</dbReference>
<sequence>MTATKQHKKVILVGDGAVGSSYAFALVTQNIAQELGIIDIFKEKTQGDAEDLSHALAFTSPKKIYAADYSDCHDADLVVLTAGAPQKPGETRLDLVEKNLRINKEVVTQIVASGFKGIFLVAANPVDVLTYSTWKFSGFPKERVIGSGTSLDSARFRQALAAKIGVDARSVHAYIMGEHGDSEFAVWSHANVAGVGLYDWLQANRDIDEQGLVDLFISVRDAAYSIINKKGATFYGIAVALARITKAILDDENAVLPLSVFQEGQYEGVEDCYIGQPAIVGAYGIVRPVNIPLNDAELQKMQASANQLKAIIDEAFAKEEFASAAKN</sequence>
<reference key="1">
    <citation type="journal article" date="2006" name="Proc. Natl. Acad. Sci. U.S.A.">
        <title>Molecular genetic anatomy of inter- and intraserotype variation in the human bacterial pathogen group A Streptococcus.</title>
        <authorList>
            <person name="Beres S.B."/>
            <person name="Richter E.W."/>
            <person name="Nagiec M.J."/>
            <person name="Sumby P."/>
            <person name="Porcella S.F."/>
            <person name="DeLeo F.R."/>
            <person name="Musser J.M."/>
        </authorList>
    </citation>
    <scope>NUCLEOTIDE SEQUENCE [LARGE SCALE GENOMIC DNA]</scope>
    <source>
        <strain>MGAS9429</strain>
    </source>
</reference>
<name>LDH_STRPC</name>
<comment type="function">
    <text evidence="1">Catalyzes the conversion of lactate to pyruvate.</text>
</comment>
<comment type="catalytic activity">
    <reaction evidence="1">
        <text>(S)-lactate + NAD(+) = pyruvate + NADH + H(+)</text>
        <dbReference type="Rhea" id="RHEA:23444"/>
        <dbReference type="ChEBI" id="CHEBI:15361"/>
        <dbReference type="ChEBI" id="CHEBI:15378"/>
        <dbReference type="ChEBI" id="CHEBI:16651"/>
        <dbReference type="ChEBI" id="CHEBI:57540"/>
        <dbReference type="ChEBI" id="CHEBI:57945"/>
        <dbReference type="EC" id="1.1.1.27"/>
    </reaction>
</comment>
<comment type="activity regulation">
    <text evidence="1">Allosterically activated by fructose 1,6-bisphosphate (FBP).</text>
</comment>
<comment type="pathway">
    <text evidence="1">Fermentation; pyruvate fermentation to lactate; (S)-lactate from pyruvate: step 1/1.</text>
</comment>
<comment type="subunit">
    <text evidence="1">Homotetramer.</text>
</comment>
<comment type="subcellular location">
    <subcellularLocation>
        <location evidence="1">Cytoplasm</location>
    </subcellularLocation>
</comment>
<comment type="similarity">
    <text evidence="1">Belongs to the LDH/MDH superfamily. LDH family.</text>
</comment>
<organism>
    <name type="scientific">Streptococcus pyogenes serotype M12 (strain MGAS9429)</name>
    <dbReference type="NCBI Taxonomy" id="370551"/>
    <lineage>
        <taxon>Bacteria</taxon>
        <taxon>Bacillati</taxon>
        <taxon>Bacillota</taxon>
        <taxon>Bacilli</taxon>
        <taxon>Lactobacillales</taxon>
        <taxon>Streptococcaceae</taxon>
        <taxon>Streptococcus</taxon>
    </lineage>
</organism>
<proteinExistence type="inferred from homology"/>
<protein>
    <recommendedName>
        <fullName evidence="1">L-lactate dehydrogenase</fullName>
        <shortName evidence="1">L-LDH</shortName>
        <ecNumber evidence="1">1.1.1.27</ecNumber>
    </recommendedName>
</protein>
<accession>Q1JLP1</accession>
<evidence type="ECO:0000255" key="1">
    <source>
        <dbReference type="HAMAP-Rule" id="MF_00488"/>
    </source>
</evidence>
<gene>
    <name evidence="1" type="primary">ldh</name>
    <name type="ordered locus">MGAS9429_Spy0991</name>
</gene>
<feature type="chain" id="PRO_1000026510" description="L-lactate dehydrogenase">
    <location>
        <begin position="1"/>
        <end position="327"/>
    </location>
</feature>
<feature type="active site" description="Proton acceptor" evidence="1">
    <location>
        <position position="179"/>
    </location>
</feature>
<feature type="binding site" evidence="1">
    <location>
        <position position="18"/>
    </location>
    <ligand>
        <name>NAD(+)</name>
        <dbReference type="ChEBI" id="CHEBI:57540"/>
    </ligand>
</feature>
<feature type="binding site" evidence="1">
    <location>
        <position position="39"/>
    </location>
    <ligand>
        <name>NAD(+)</name>
        <dbReference type="ChEBI" id="CHEBI:57540"/>
    </ligand>
</feature>
<feature type="binding site" evidence="1">
    <location>
        <position position="44"/>
    </location>
    <ligand>
        <name>NAD(+)</name>
        <dbReference type="ChEBI" id="CHEBI:57540"/>
    </ligand>
</feature>
<feature type="binding site" evidence="1">
    <location>
        <position position="69"/>
    </location>
    <ligand>
        <name>NAD(+)</name>
        <dbReference type="ChEBI" id="CHEBI:57540"/>
    </ligand>
</feature>
<feature type="binding site" evidence="1">
    <location>
        <begin position="83"/>
        <end position="84"/>
    </location>
    <ligand>
        <name>NAD(+)</name>
        <dbReference type="ChEBI" id="CHEBI:57540"/>
    </ligand>
</feature>
<feature type="binding site" evidence="1">
    <location>
        <position position="86"/>
    </location>
    <ligand>
        <name>substrate</name>
    </ligand>
</feature>
<feature type="binding site" evidence="1">
    <location>
        <position position="92"/>
    </location>
    <ligand>
        <name>substrate</name>
    </ligand>
</feature>
<feature type="binding site" evidence="1">
    <location>
        <begin position="122"/>
        <end position="124"/>
    </location>
    <ligand>
        <name>NAD(+)</name>
        <dbReference type="ChEBI" id="CHEBI:57540"/>
    </ligand>
</feature>
<feature type="binding site" evidence="1">
    <location>
        <begin position="124"/>
        <end position="127"/>
    </location>
    <ligand>
        <name>substrate</name>
    </ligand>
</feature>
<feature type="binding site" evidence="1">
    <location>
        <position position="147"/>
    </location>
    <ligand>
        <name>NAD(+)</name>
        <dbReference type="ChEBI" id="CHEBI:57540"/>
    </ligand>
</feature>
<feature type="binding site" evidence="1">
    <location>
        <begin position="152"/>
        <end position="155"/>
    </location>
    <ligand>
        <name>substrate</name>
    </ligand>
</feature>
<feature type="binding site" evidence="1">
    <location>
        <position position="157"/>
    </location>
    <ligand>
        <name>beta-D-fructose 1,6-bisphosphate</name>
        <dbReference type="ChEBI" id="CHEBI:32966"/>
        <note>allosteric activator</note>
    </ligand>
</feature>
<feature type="binding site" evidence="1">
    <location>
        <position position="172"/>
    </location>
    <ligand>
        <name>beta-D-fructose 1,6-bisphosphate</name>
        <dbReference type="ChEBI" id="CHEBI:32966"/>
        <note>allosteric activator</note>
    </ligand>
</feature>
<feature type="binding site" evidence="1">
    <location>
        <position position="233"/>
    </location>
    <ligand>
        <name>substrate</name>
    </ligand>
</feature>
<feature type="modified residue" description="Phosphotyrosine" evidence="1">
    <location>
        <position position="224"/>
    </location>
</feature>